<name>PYRH_ANAMM</name>
<keyword id="KW-0067">ATP-binding</keyword>
<keyword id="KW-0963">Cytoplasm</keyword>
<keyword id="KW-0418">Kinase</keyword>
<keyword id="KW-0547">Nucleotide-binding</keyword>
<keyword id="KW-0665">Pyrimidine biosynthesis</keyword>
<keyword id="KW-0808">Transferase</keyword>
<evidence type="ECO:0000255" key="1">
    <source>
        <dbReference type="HAMAP-Rule" id="MF_01220"/>
    </source>
</evidence>
<evidence type="ECO:0000305" key="2"/>
<protein>
    <recommendedName>
        <fullName evidence="1">Uridylate kinase</fullName>
        <shortName evidence="1">UK</shortName>
        <ecNumber evidence="1">2.7.4.22</ecNumber>
    </recommendedName>
    <alternativeName>
        <fullName evidence="1">Uridine monophosphate kinase</fullName>
        <shortName evidence="1">UMP kinase</shortName>
        <shortName evidence="1">UMPK</shortName>
    </alternativeName>
</protein>
<organism>
    <name type="scientific">Anaplasma marginale (strain St. Maries)</name>
    <dbReference type="NCBI Taxonomy" id="234826"/>
    <lineage>
        <taxon>Bacteria</taxon>
        <taxon>Pseudomonadati</taxon>
        <taxon>Pseudomonadota</taxon>
        <taxon>Alphaproteobacteria</taxon>
        <taxon>Rickettsiales</taxon>
        <taxon>Anaplasmataceae</taxon>
        <taxon>Anaplasma</taxon>
    </lineage>
</organism>
<feature type="chain" id="PRO_0000323783" description="Uridylate kinase">
    <location>
        <begin position="1"/>
        <end position="245"/>
    </location>
</feature>
<feature type="binding site" evidence="1">
    <location>
        <begin position="20"/>
        <end position="23"/>
    </location>
    <ligand>
        <name>ATP</name>
        <dbReference type="ChEBI" id="CHEBI:30616"/>
    </ligand>
</feature>
<feature type="binding site" evidence="1">
    <location>
        <position position="62"/>
    </location>
    <ligand>
        <name>UMP</name>
        <dbReference type="ChEBI" id="CHEBI:57865"/>
    </ligand>
</feature>
<feature type="binding site" evidence="1">
    <location>
        <position position="63"/>
    </location>
    <ligand>
        <name>ATP</name>
        <dbReference type="ChEBI" id="CHEBI:30616"/>
    </ligand>
</feature>
<feature type="binding site" evidence="1">
    <location>
        <position position="67"/>
    </location>
    <ligand>
        <name>ATP</name>
        <dbReference type="ChEBI" id="CHEBI:30616"/>
    </ligand>
</feature>
<feature type="binding site" evidence="1">
    <location>
        <position position="81"/>
    </location>
    <ligand>
        <name>UMP</name>
        <dbReference type="ChEBI" id="CHEBI:57865"/>
    </ligand>
</feature>
<feature type="binding site" evidence="1">
    <location>
        <begin position="142"/>
        <end position="149"/>
    </location>
    <ligand>
        <name>UMP</name>
        <dbReference type="ChEBI" id="CHEBI:57865"/>
    </ligand>
</feature>
<feature type="binding site" evidence="1">
    <location>
        <position position="169"/>
    </location>
    <ligand>
        <name>ATP</name>
        <dbReference type="ChEBI" id="CHEBI:30616"/>
    </ligand>
</feature>
<feature type="binding site" evidence="1">
    <location>
        <position position="170"/>
    </location>
    <ligand>
        <name>ATP</name>
        <dbReference type="ChEBI" id="CHEBI:30616"/>
    </ligand>
</feature>
<feature type="binding site" evidence="1">
    <location>
        <position position="175"/>
    </location>
    <ligand>
        <name>ATP</name>
        <dbReference type="ChEBI" id="CHEBI:30616"/>
    </ligand>
</feature>
<feature type="binding site" evidence="1">
    <location>
        <position position="178"/>
    </location>
    <ligand>
        <name>ATP</name>
        <dbReference type="ChEBI" id="CHEBI:30616"/>
    </ligand>
</feature>
<accession>Q5PBQ6</accession>
<dbReference type="EC" id="2.7.4.22" evidence="1"/>
<dbReference type="EMBL" id="CP000030">
    <property type="protein sequence ID" value="AAV86273.1"/>
    <property type="status" value="ALT_INIT"/>
    <property type="molecule type" value="Genomic_DNA"/>
</dbReference>
<dbReference type="RefSeq" id="WP_010262748.1">
    <property type="nucleotide sequence ID" value="NZ_AFMU01000021.1"/>
</dbReference>
<dbReference type="SMR" id="Q5PBQ6"/>
<dbReference type="GeneID" id="7398810"/>
<dbReference type="KEGG" id="ama:AM128"/>
<dbReference type="PATRIC" id="fig|320483.3.peg.112"/>
<dbReference type="HOGENOM" id="CLU_033861_0_0_5"/>
<dbReference type="UniPathway" id="UPA00159">
    <property type="reaction ID" value="UER00275"/>
</dbReference>
<dbReference type="GO" id="GO:0005737">
    <property type="term" value="C:cytoplasm"/>
    <property type="evidence" value="ECO:0007669"/>
    <property type="project" value="UniProtKB-SubCell"/>
</dbReference>
<dbReference type="GO" id="GO:0005524">
    <property type="term" value="F:ATP binding"/>
    <property type="evidence" value="ECO:0007669"/>
    <property type="project" value="UniProtKB-KW"/>
</dbReference>
<dbReference type="GO" id="GO:0033862">
    <property type="term" value="F:UMP kinase activity"/>
    <property type="evidence" value="ECO:0007669"/>
    <property type="project" value="UniProtKB-EC"/>
</dbReference>
<dbReference type="GO" id="GO:0044210">
    <property type="term" value="P:'de novo' CTP biosynthetic process"/>
    <property type="evidence" value="ECO:0007669"/>
    <property type="project" value="UniProtKB-UniRule"/>
</dbReference>
<dbReference type="GO" id="GO:0006225">
    <property type="term" value="P:UDP biosynthetic process"/>
    <property type="evidence" value="ECO:0007669"/>
    <property type="project" value="TreeGrafter"/>
</dbReference>
<dbReference type="CDD" id="cd04254">
    <property type="entry name" value="AAK_UMPK-PyrH-Ec"/>
    <property type="match status" value="1"/>
</dbReference>
<dbReference type="FunFam" id="3.40.1160.10:FF:000001">
    <property type="entry name" value="Uridylate kinase"/>
    <property type="match status" value="1"/>
</dbReference>
<dbReference type="Gene3D" id="3.40.1160.10">
    <property type="entry name" value="Acetylglutamate kinase-like"/>
    <property type="match status" value="1"/>
</dbReference>
<dbReference type="HAMAP" id="MF_01220_B">
    <property type="entry name" value="PyrH_B"/>
    <property type="match status" value="1"/>
</dbReference>
<dbReference type="InterPro" id="IPR036393">
    <property type="entry name" value="AceGlu_kinase-like_sf"/>
</dbReference>
<dbReference type="InterPro" id="IPR001048">
    <property type="entry name" value="Asp/Glu/Uridylate_kinase"/>
</dbReference>
<dbReference type="InterPro" id="IPR011817">
    <property type="entry name" value="Uridylate_kinase"/>
</dbReference>
<dbReference type="InterPro" id="IPR015963">
    <property type="entry name" value="Uridylate_kinase_bac"/>
</dbReference>
<dbReference type="NCBIfam" id="TIGR02075">
    <property type="entry name" value="pyrH_bact"/>
    <property type="match status" value="1"/>
</dbReference>
<dbReference type="PANTHER" id="PTHR42833">
    <property type="entry name" value="URIDYLATE KINASE"/>
    <property type="match status" value="1"/>
</dbReference>
<dbReference type="PANTHER" id="PTHR42833:SF4">
    <property type="entry name" value="URIDYLATE KINASE PUMPKIN, CHLOROPLASTIC"/>
    <property type="match status" value="1"/>
</dbReference>
<dbReference type="Pfam" id="PF00696">
    <property type="entry name" value="AA_kinase"/>
    <property type="match status" value="1"/>
</dbReference>
<dbReference type="PIRSF" id="PIRSF005650">
    <property type="entry name" value="Uridylate_kin"/>
    <property type="match status" value="1"/>
</dbReference>
<dbReference type="SUPFAM" id="SSF53633">
    <property type="entry name" value="Carbamate kinase-like"/>
    <property type="match status" value="1"/>
</dbReference>
<proteinExistence type="inferred from homology"/>
<reference key="1">
    <citation type="journal article" date="2005" name="Proc. Natl. Acad. Sci. U.S.A.">
        <title>Complete genome sequencing of Anaplasma marginale reveals that the surface is skewed to two superfamilies of outer membrane proteins.</title>
        <authorList>
            <person name="Brayton K.A."/>
            <person name="Kappmeyer L.S."/>
            <person name="Herndon D.R."/>
            <person name="Dark M.J."/>
            <person name="Tibbals D.L."/>
            <person name="Palmer G.H."/>
            <person name="McGuire T.C."/>
            <person name="Knowles D.P. Jr."/>
        </authorList>
    </citation>
    <scope>NUCLEOTIDE SEQUENCE [LARGE SCALE GENOMIC DNA]</scope>
    <source>
        <strain>St. Maries</strain>
    </source>
</reference>
<gene>
    <name evidence="1" type="primary">pyrH</name>
    <name type="ordered locus">AM128</name>
</gene>
<sequence>MSVSDGAATGSVRYSRVLLKVSGEAFVGEKRFGFDPAVVLRLSRDLKNVKESGVELCIVVGGGNIFRGASTSDGFERTSNDYVGMLATVINALALQNALEEMGVECRVLSAMPMTAVCETYVRRRAVRHLEKGRVVICAAGIGSPFFTTDTAAALRGIEMRCDAIFKGTQVDGVYSSDPKKDGSAVRYDRISYHDLLSSNLKIMDAAAISLARENSVPIIVFDLGRDGAFFEAVHGRGLFTTISD</sequence>
<comment type="function">
    <text evidence="1">Catalyzes the reversible phosphorylation of UMP to UDP.</text>
</comment>
<comment type="catalytic activity">
    <reaction evidence="1">
        <text>UMP + ATP = UDP + ADP</text>
        <dbReference type="Rhea" id="RHEA:24400"/>
        <dbReference type="ChEBI" id="CHEBI:30616"/>
        <dbReference type="ChEBI" id="CHEBI:57865"/>
        <dbReference type="ChEBI" id="CHEBI:58223"/>
        <dbReference type="ChEBI" id="CHEBI:456216"/>
        <dbReference type="EC" id="2.7.4.22"/>
    </reaction>
</comment>
<comment type="activity regulation">
    <text evidence="1">Inhibited by UTP.</text>
</comment>
<comment type="pathway">
    <text evidence="1">Pyrimidine metabolism; CTP biosynthesis via de novo pathway; UDP from UMP (UMPK route): step 1/1.</text>
</comment>
<comment type="subunit">
    <text evidence="1">Homohexamer.</text>
</comment>
<comment type="subcellular location">
    <subcellularLocation>
        <location evidence="1">Cytoplasm</location>
    </subcellularLocation>
</comment>
<comment type="similarity">
    <text evidence="1">Belongs to the UMP kinase family.</text>
</comment>
<comment type="sequence caution" evidence="2">
    <conflict type="erroneous initiation">
        <sequence resource="EMBL-CDS" id="AAV86273"/>
    </conflict>
</comment>